<comment type="function">
    <text evidence="1">Part of the ecpRABCDE operon, which encodes the E.coli common pilus (ECP). ECP is found in both commensal and pathogenic strains and plays a dual role in early-stage biofilm development and host cell recognition (By similarity).</text>
</comment>
<comment type="induction">
    <text evidence="1">Negatively regulated by H-NS. Positively regulated by IHF and EcpR (By similarity).</text>
</comment>
<comment type="similarity">
    <text evidence="3">Belongs to the EcpB/EcpE family.</text>
</comment>
<feature type="signal peptide" evidence="2">
    <location>
        <begin position="1"/>
        <end position="20"/>
    </location>
</feature>
<feature type="chain" id="PRO_0000369156" description="Probable fimbrial chaperone EcpB">
    <location>
        <begin position="21"/>
        <end position="222"/>
    </location>
</feature>
<keyword id="KW-0143">Chaperone</keyword>
<keyword id="KW-1029">Fimbrium biogenesis</keyword>
<keyword id="KW-0732">Signal</keyword>
<accession>B1XE34</accession>
<protein>
    <recommendedName>
        <fullName>Probable fimbrial chaperone EcpB</fullName>
    </recommendedName>
</protein>
<evidence type="ECO:0000250" key="1"/>
<evidence type="ECO:0000255" key="2"/>
<evidence type="ECO:0000305" key="3"/>
<proteinExistence type="inferred from homology"/>
<dbReference type="EMBL" id="CP000948">
    <property type="protein sequence ID" value="ACB01458.1"/>
    <property type="molecule type" value="Genomic_DNA"/>
</dbReference>
<dbReference type="RefSeq" id="WP_000716398.1">
    <property type="nucleotide sequence ID" value="NC_010473.1"/>
</dbReference>
<dbReference type="SMR" id="B1XE34"/>
<dbReference type="GeneID" id="75204621"/>
<dbReference type="KEGG" id="ecd:ECDH10B_0280"/>
<dbReference type="HOGENOM" id="CLU_106652_0_0_6"/>
<dbReference type="Gene3D" id="2.60.40.10">
    <property type="entry name" value="Immunoglobulins"/>
    <property type="match status" value="1"/>
</dbReference>
<dbReference type="InterPro" id="IPR040695">
    <property type="entry name" value="EcpB_C"/>
</dbReference>
<dbReference type="InterPro" id="IPR013783">
    <property type="entry name" value="Ig-like_fold"/>
</dbReference>
<dbReference type="InterPro" id="IPR008962">
    <property type="entry name" value="PapD-like_sf"/>
</dbReference>
<dbReference type="Pfam" id="PF18649">
    <property type="entry name" value="EcpB_C"/>
    <property type="match status" value="1"/>
</dbReference>
<dbReference type="SUPFAM" id="SSF49354">
    <property type="entry name" value="PapD-like"/>
    <property type="match status" value="1"/>
</dbReference>
<name>ECPB_ECODH</name>
<sequence>MKKHLLPLALLFSGISPAQALDVGDISSFMNSDSSTLSKTIKNSTDSGRLINIRLERLSSPLDDGQVISMDKPDELLLTPASLLLPAQASEVIRFFYKGPADEKERYYRIVWFDQALSDAQRDNANRSAVATASARIGTILVVAPRQANYHFQYANGSLTNTGNATLRILAYGPCLKAANGKECKENYYLMPGKSRRFTRVDTADNKGRVALWQGDKFIPVK</sequence>
<gene>
    <name type="primary">ecpB</name>
    <name type="synonym">matC</name>
    <name type="ordered locus">ECDH10B_0280</name>
</gene>
<reference key="1">
    <citation type="journal article" date="2008" name="J. Bacteriol.">
        <title>The complete genome sequence of Escherichia coli DH10B: insights into the biology of a laboratory workhorse.</title>
        <authorList>
            <person name="Durfee T."/>
            <person name="Nelson R."/>
            <person name="Baldwin S."/>
            <person name="Plunkett G. III"/>
            <person name="Burland V."/>
            <person name="Mau B."/>
            <person name="Petrosino J.F."/>
            <person name="Qin X."/>
            <person name="Muzny D.M."/>
            <person name="Ayele M."/>
            <person name="Gibbs R.A."/>
            <person name="Csorgo B."/>
            <person name="Posfai G."/>
            <person name="Weinstock G.M."/>
            <person name="Blattner F.R."/>
        </authorList>
    </citation>
    <scope>NUCLEOTIDE SEQUENCE [LARGE SCALE GENOMIC DNA]</scope>
    <source>
        <strain>K12 / DH10B</strain>
    </source>
</reference>
<organism>
    <name type="scientific">Escherichia coli (strain K12 / DH10B)</name>
    <dbReference type="NCBI Taxonomy" id="316385"/>
    <lineage>
        <taxon>Bacteria</taxon>
        <taxon>Pseudomonadati</taxon>
        <taxon>Pseudomonadota</taxon>
        <taxon>Gammaproteobacteria</taxon>
        <taxon>Enterobacterales</taxon>
        <taxon>Enterobacteriaceae</taxon>
        <taxon>Escherichia</taxon>
    </lineage>
</organism>